<keyword id="KW-0024">Alternative initiation</keyword>
<keyword id="KW-0963">Cytoplasm</keyword>
<keyword id="KW-0217">Developmental protein</keyword>
<keyword id="KW-0903">Direct protein sequencing</keyword>
<keyword id="KW-0443">Lipid metabolism</keyword>
<keyword id="KW-0496">Mitochondrion</keyword>
<keyword id="KW-0560">Oxidoreductase</keyword>
<keyword id="KW-0575">Peroxidase</keyword>
<keyword id="KW-0597">Phosphoprotein</keyword>
<keyword id="KW-1185">Reference proteome</keyword>
<keyword id="KW-0712">Selenocysteine</keyword>
<keyword id="KW-0809">Transit peptide</keyword>
<comment type="function">
    <text evidence="1 2 5 6 7 8">Essential antioxidant peroxidase that directly reduces phospholipid hydroperoxide even if they are incorporated in membranes and lipoproteins (PubMed:2386798, PubMed:3978121, PubMed:8135530). Can also reduce fatty acid hydroperoxide, cholesterol hydroperoxide and thymine hydroperoxide (PubMed:2386798, PubMed:3978121, PubMed:8135530). Plays a key role in protecting cells from oxidative damage by preventing membrane lipid peroxidation (By similarity). Required to prevent cells from ferroptosis, a non-apoptotic cell death resulting from an iron-dependent accumulation of lipid reactive oxygen species (By similarity). The presence of selenocysteine (Sec) versus Cys at the active site is essential for life: it provides resistance to overoxidation and prevents cells against ferroptosis (By similarity). The presence of Sec at the active site is also essential for the survival of a specific type of parvalbumin-positive interneurons, thereby preventing against fatal epileptic seizures (By similarity). May be required to protect cells from the toxicity of ingested lipid hydroperoxides (By similarity). Required for normal sperm development and male fertility (By similarity). Essential for maturation and survival of photoreceptor cells (By similarity). Plays a role in a primary T-cell response to viral and parasitic infection by protecting T-cells from ferroptosis and by supporting T-cell expansion (By similarity). Plays a role of glutathione peroxidase in platelets in the arachidonic acid metabolism (By similarity). Reduces hydroperoxy ester lipids formed by a 15-lipoxygenase that may play a role as down-regulator of the cellular 15-lipoxygenase pathway (PubMed:8617728). Can also reduce small soluble hydroperoxides such as H2O2, cumene hydroperoxide and tert-butyl hydroperoxide (PubMed:3978121).</text>
</comment>
<comment type="catalytic activity">
    <reaction evidence="5 6 7 8">
        <text>a hydroperoxy polyunsaturated fatty acid + 2 glutathione = a hydroxy polyunsaturated fatty acid + glutathione disulfide + H2O</text>
        <dbReference type="Rhea" id="RHEA:19057"/>
        <dbReference type="ChEBI" id="CHEBI:15377"/>
        <dbReference type="ChEBI" id="CHEBI:57925"/>
        <dbReference type="ChEBI" id="CHEBI:58297"/>
        <dbReference type="ChEBI" id="CHEBI:131871"/>
        <dbReference type="ChEBI" id="CHEBI:134019"/>
        <dbReference type="EC" id="1.11.1.12"/>
    </reaction>
    <physiologicalReaction direction="left-to-right" evidence="15">
        <dbReference type="Rhea" id="RHEA:19058"/>
    </physiologicalReaction>
</comment>
<comment type="catalytic activity">
    <reaction evidence="6">
        <text>2 glutathione + H2O2 = glutathione disulfide + 2 H2O</text>
        <dbReference type="Rhea" id="RHEA:16833"/>
        <dbReference type="ChEBI" id="CHEBI:15377"/>
        <dbReference type="ChEBI" id="CHEBI:16240"/>
        <dbReference type="ChEBI" id="CHEBI:57925"/>
        <dbReference type="ChEBI" id="CHEBI:58297"/>
        <dbReference type="EC" id="1.11.1.9"/>
    </reaction>
    <physiologicalReaction direction="left-to-right" evidence="14">
        <dbReference type="Rhea" id="RHEA:16834"/>
    </physiologicalReaction>
</comment>
<comment type="catalytic activity">
    <reaction evidence="6">
        <text>tert-butyl hydroperoxide + 2 glutathione = tert-butanol + glutathione disulfide + H2O</text>
        <dbReference type="Rhea" id="RHEA:69412"/>
        <dbReference type="ChEBI" id="CHEBI:15377"/>
        <dbReference type="ChEBI" id="CHEBI:45895"/>
        <dbReference type="ChEBI" id="CHEBI:57925"/>
        <dbReference type="ChEBI" id="CHEBI:58297"/>
        <dbReference type="ChEBI" id="CHEBI:64090"/>
    </reaction>
    <physiologicalReaction direction="left-to-right" evidence="14">
        <dbReference type="Rhea" id="RHEA:69413"/>
    </physiologicalReaction>
</comment>
<comment type="catalytic activity">
    <reaction evidence="6">
        <text>cumene hydroperoxide + 2 glutathione = 2-phenylpropan-2-ol + glutathione disulfide + H2O</text>
        <dbReference type="Rhea" id="RHEA:69651"/>
        <dbReference type="ChEBI" id="CHEBI:15377"/>
        <dbReference type="ChEBI" id="CHEBI:57925"/>
        <dbReference type="ChEBI" id="CHEBI:58297"/>
        <dbReference type="ChEBI" id="CHEBI:78673"/>
        <dbReference type="ChEBI" id="CHEBI:131607"/>
    </reaction>
    <physiologicalReaction direction="left-to-right" evidence="14">
        <dbReference type="Rhea" id="RHEA:69652"/>
    </physiologicalReaction>
</comment>
<comment type="catalytic activity">
    <reaction evidence="2">
        <text>(9S)-hydroperoxy-(10E,12Z)-octadecadienoate + 2 glutathione = (9S)-hydroxy-(10E,12Z)-octadecadienoate + glutathione disulfide + H2O</text>
        <dbReference type="Rhea" id="RHEA:76687"/>
        <dbReference type="ChEBI" id="CHEBI:15377"/>
        <dbReference type="ChEBI" id="CHEBI:57925"/>
        <dbReference type="ChEBI" id="CHEBI:58297"/>
        <dbReference type="ChEBI" id="CHEBI:60955"/>
        <dbReference type="ChEBI" id="CHEBI:77852"/>
    </reaction>
    <physiologicalReaction direction="left-to-right" evidence="2">
        <dbReference type="Rhea" id="RHEA:76688"/>
    </physiologicalReaction>
</comment>
<comment type="catalytic activity">
    <reaction evidence="8">
        <text>(13S)-hydroperoxy-(9Z,11E)-octadecadienoate + 2 glutathione = (13S)-hydroxy-(9Z,11E)-octadecadienoate + glutathione disulfide + H2O</text>
        <dbReference type="Rhea" id="RHEA:48888"/>
        <dbReference type="ChEBI" id="CHEBI:15377"/>
        <dbReference type="ChEBI" id="CHEBI:57466"/>
        <dbReference type="ChEBI" id="CHEBI:57925"/>
        <dbReference type="ChEBI" id="CHEBI:58297"/>
        <dbReference type="ChEBI" id="CHEBI:90850"/>
    </reaction>
    <physiologicalReaction direction="left-to-right" evidence="15">
        <dbReference type="Rhea" id="RHEA:48889"/>
    </physiologicalReaction>
</comment>
<comment type="catalytic activity">
    <reaction evidence="2">
        <text>(5S)-hydroperoxy-(6E,8Z,11Z,14Z)-eicosatetraenoate + 2 glutathione = (5S)-hydroxy-(6E,8Z,11Z,14Z)-eicosatetraenoate + glutathione disulfide + H2O</text>
        <dbReference type="Rhea" id="RHEA:48620"/>
        <dbReference type="ChEBI" id="CHEBI:15377"/>
        <dbReference type="ChEBI" id="CHEBI:57450"/>
        <dbReference type="ChEBI" id="CHEBI:57925"/>
        <dbReference type="ChEBI" id="CHEBI:58297"/>
        <dbReference type="ChEBI" id="CHEBI:90632"/>
    </reaction>
    <physiologicalReaction direction="left-to-right" evidence="2">
        <dbReference type="Rhea" id="RHEA:48621"/>
    </physiologicalReaction>
</comment>
<comment type="catalytic activity">
    <reaction evidence="2">
        <text>(12R)-hydroperoxy-(5Z,8Z,10E,14Z)-eicosatetraenoate + 2 glutathione = (12R)-hydroxy-(5Z,8Z,10E,14Z)-eicosatetraenoate + glutathione disulfide + H2O</text>
        <dbReference type="Rhea" id="RHEA:76691"/>
        <dbReference type="ChEBI" id="CHEBI:15377"/>
        <dbReference type="ChEBI" id="CHEBI:57925"/>
        <dbReference type="ChEBI" id="CHEBI:58297"/>
        <dbReference type="ChEBI" id="CHEBI:75230"/>
        <dbReference type="ChEBI" id="CHEBI:83343"/>
    </reaction>
    <physiologicalReaction direction="left-to-right" evidence="2">
        <dbReference type="Rhea" id="RHEA:76692"/>
    </physiologicalReaction>
</comment>
<comment type="catalytic activity">
    <reaction evidence="2">
        <text>(12S)-hydroperoxy-(5Z,8Z,10E,14Z)-eicosatetraenoate + 2 glutathione = (12S)-hydroxy-(5Z,8Z,10E,14Z)-eicosatetraenoate + glutathione disulfide + H2O</text>
        <dbReference type="Rhea" id="RHEA:50708"/>
        <dbReference type="ChEBI" id="CHEBI:15377"/>
        <dbReference type="ChEBI" id="CHEBI:57444"/>
        <dbReference type="ChEBI" id="CHEBI:57925"/>
        <dbReference type="ChEBI" id="CHEBI:58297"/>
        <dbReference type="ChEBI" id="CHEBI:90680"/>
    </reaction>
    <physiologicalReaction direction="left-to-right" evidence="2">
        <dbReference type="Rhea" id="RHEA:50709"/>
    </physiologicalReaction>
</comment>
<comment type="catalytic activity">
    <reaction evidence="2">
        <text>(15S)-hydroperoxy-(5Z,8Z,11Z,13E)-eicosatetraenoate + 2 glutathione = (15S)-hydroxy-(5Z,8Z,11Z,13E)-eicosatetraenoate + glutathione disulfide + H2O</text>
        <dbReference type="Rhea" id="RHEA:76695"/>
        <dbReference type="ChEBI" id="CHEBI:15377"/>
        <dbReference type="ChEBI" id="CHEBI:57409"/>
        <dbReference type="ChEBI" id="CHEBI:57446"/>
        <dbReference type="ChEBI" id="CHEBI:57925"/>
        <dbReference type="ChEBI" id="CHEBI:58297"/>
    </reaction>
    <physiologicalReaction direction="left-to-right" evidence="2">
        <dbReference type="Rhea" id="RHEA:76696"/>
    </physiologicalReaction>
</comment>
<comment type="catalytic activity">
    <reaction evidence="2">
        <text>(5S)-hydroperoxy-(6E,8Z,11Z,14Z,17Z)-eicosapentaenoate + 2 glutathione = (5S)-hydroxy-(6E,8Z,11Z,14Z,17Z)-eicosapentaenoate + glutathione disulfide + H2O</text>
        <dbReference type="Rhea" id="RHEA:76699"/>
        <dbReference type="ChEBI" id="CHEBI:15377"/>
        <dbReference type="ChEBI" id="CHEBI:57925"/>
        <dbReference type="ChEBI" id="CHEBI:58297"/>
        <dbReference type="ChEBI" id="CHEBI:195399"/>
        <dbReference type="ChEBI" id="CHEBI:195400"/>
    </reaction>
    <physiologicalReaction direction="left-to-right" evidence="2">
        <dbReference type="Rhea" id="RHEA:76700"/>
    </physiologicalReaction>
</comment>
<comment type="catalytic activity">
    <reaction evidence="2">
        <text>(12S)-hydroperoxy-(5Z,8Z,10E,14Z,17Z)-eicosapentaenoate + 2 glutathione = (12S)-hydroxy-(5Z,8Z,10E,14Z,17Z)-eicosapentaenoate + glutathione disulfide + H2O</text>
        <dbReference type="Rhea" id="RHEA:76703"/>
        <dbReference type="ChEBI" id="CHEBI:15377"/>
        <dbReference type="ChEBI" id="CHEBI:57925"/>
        <dbReference type="ChEBI" id="CHEBI:58297"/>
        <dbReference type="ChEBI" id="CHEBI:90772"/>
        <dbReference type="ChEBI" id="CHEBI:195401"/>
    </reaction>
    <physiologicalReaction direction="left-to-right" evidence="2">
        <dbReference type="Rhea" id="RHEA:76704"/>
    </physiologicalReaction>
</comment>
<comment type="catalytic activity">
    <reaction evidence="2">
        <text>(15S)-hydroperoxy-(5Z,8Z,11Z,13E,17Z)-eicosapentaenoate + 2 glutathione = (15S)-hydroxy-(5Z,8Z,11Z,13E,17Z)-eicosapentaenoate + glutathione disulfide + H2O</text>
        <dbReference type="Rhea" id="RHEA:76707"/>
        <dbReference type="ChEBI" id="CHEBI:15377"/>
        <dbReference type="ChEBI" id="CHEBI:57925"/>
        <dbReference type="ChEBI" id="CHEBI:58297"/>
        <dbReference type="ChEBI" id="CHEBI:132087"/>
        <dbReference type="ChEBI" id="CHEBI:194369"/>
    </reaction>
    <physiologicalReaction direction="left-to-right" evidence="2">
        <dbReference type="Rhea" id="RHEA:76708"/>
    </physiologicalReaction>
</comment>
<comment type="catalytic activity">
    <reaction evidence="2">
        <text>(15S)-hydroperoxy-(11Z,13E)-eicosadienoate + 2 glutathione = (15S)-hydroxy-(11Z,13E)-eicosadienoate + glutathione disulfide + H2O</text>
        <dbReference type="Rhea" id="RHEA:76711"/>
        <dbReference type="ChEBI" id="CHEBI:15377"/>
        <dbReference type="ChEBI" id="CHEBI:57925"/>
        <dbReference type="ChEBI" id="CHEBI:58297"/>
        <dbReference type="ChEBI" id="CHEBI:144832"/>
        <dbReference type="ChEBI" id="CHEBI:195402"/>
    </reaction>
    <physiologicalReaction direction="left-to-right" evidence="2">
        <dbReference type="Rhea" id="RHEA:76712"/>
    </physiologicalReaction>
</comment>
<comment type="catalytic activity">
    <reaction evidence="2">
        <text>(17S)-hydroperoxy-(4Z,7Z,10Z,13Z,15E,19Z)-docosahexaenoate + 2 glutathione = (17S)-hydroxy-(4Z,7Z,10Z,13Z,15E,19Z)-docosahexaenoate + glutathione disulfide + H2O</text>
        <dbReference type="Rhea" id="RHEA:76715"/>
        <dbReference type="ChEBI" id="CHEBI:15377"/>
        <dbReference type="ChEBI" id="CHEBI:57925"/>
        <dbReference type="ChEBI" id="CHEBI:58297"/>
        <dbReference type="ChEBI" id="CHEBI:133795"/>
        <dbReference type="ChEBI" id="CHEBI:195403"/>
    </reaction>
    <physiologicalReaction direction="left-to-right" evidence="2">
        <dbReference type="Rhea" id="RHEA:76716"/>
    </physiologicalReaction>
</comment>
<comment type="catalytic activity">
    <reaction evidence="2">
        <text>a hydroperoxy-1,2-diacyl-glycero-3-phosphocholine + 2 glutathione = a hydroxy-1,2-diacyl-glycero-3-phosphocholine + glutathione disulfide + H2O</text>
        <dbReference type="Rhea" id="RHEA:76731"/>
        <dbReference type="ChEBI" id="CHEBI:15377"/>
        <dbReference type="ChEBI" id="CHEBI:57925"/>
        <dbReference type="ChEBI" id="CHEBI:58297"/>
        <dbReference type="ChEBI" id="CHEBI:195423"/>
        <dbReference type="ChEBI" id="CHEBI:195424"/>
    </reaction>
    <physiologicalReaction direction="left-to-right" evidence="2">
        <dbReference type="Rhea" id="RHEA:76732"/>
    </physiologicalReaction>
</comment>
<comment type="subunit">
    <text evidence="2">Monomer. Has a tendency to form higher mass oligomers. Interacts with FUNDC1; this interaction promotes GPX4 recruitment into mitochondria through TOM/TIM complex where it is degraded by mitophagy.</text>
</comment>
<comment type="subcellular location">
    <molecule>Isoform Mitochondrial</molecule>
    <subcellularLocation>
        <location evidence="1">Mitochondrion</location>
    </subcellularLocation>
</comment>
<comment type="subcellular location">
    <molecule>Isoform Cytoplasmic</molecule>
    <subcellularLocation>
        <location evidence="1">Cytoplasm</location>
    </subcellularLocation>
</comment>
<comment type="alternative products">
    <event type="alternative initiation"/>
    <isoform>
        <id>P36968-1</id>
        <name>Mitochondrial</name>
        <sequence type="displayed"/>
    </isoform>
    <isoform>
        <id>P36968-2</id>
        <name>Cytoplasmic</name>
        <sequence type="described" ref="VSP_018744"/>
    </isoform>
</comment>
<comment type="similarity">
    <text evidence="13">Belongs to the glutathione peroxidase family.</text>
</comment>
<reference key="1">
    <citation type="journal article" date="1993" name="Biochem. Biophys. Res. Commun.">
        <title>Phospholipid hydroperoxide glutathione peroxidase: full-length pig blastocyst cDNA sequence and regulation by selenium status.</title>
        <authorList>
            <person name="Sunde R.A."/>
            <person name="Dyer J.A."/>
            <person name="Moran T."/>
            <person name="Evenson J.K."/>
            <person name="Sugimoto M."/>
        </authorList>
    </citation>
    <scope>NUCLEOTIDE SEQUENCE [MRNA] (ISOFORMS MITOCHONDRIAL AND CYTOPLASMIC)</scope>
</reference>
<reference key="2">
    <citation type="journal article" date="1994" name="J. Biol. Chem.">
        <title>Phospholipid-hydroperoxide glutathione peroxidase. Genomic DNA, cDNA, and deduced amino acid sequence.</title>
        <authorList>
            <person name="Brigelius-Flohe R."/>
            <person name="Aumann K.-D."/>
            <person name="Bloecker H."/>
            <person name="Gross G."/>
            <person name="Kloeppel K.-D."/>
            <person name="Maiorino M."/>
            <person name="Roveri A."/>
            <person name="Schuckelt R."/>
            <person name="Ursini F."/>
            <person name="Wingender E."/>
            <person name="Flohe L."/>
        </authorList>
    </citation>
    <scope>NUCLEOTIDE SEQUENCE [GENOMIC DNA / MRNA] (ISOFORM CYTOPLASMIC)</scope>
    <scope>PARTIAL PROTEIN SEQUENCE</scope>
    <source>
        <tissue>Heart</tissue>
        <tissue>Liver</tissue>
    </source>
</reference>
<reference key="3">
    <citation type="submission" date="2010-12" db="EMBL/GenBank/DDBJ databases">
        <authorList>
            <person name="Flohe L."/>
        </authorList>
    </citation>
    <scope>SEQUENCE REVISION TO 73</scope>
</reference>
<reference key="4">
    <citation type="journal article" date="1991" name="Free Radic. Res. Commun.">
        <title>Phospholipid hydroperoxide glutathione peroxidase is a selenoenzyme distinct from the classical glutathione peroxidase as evident from cDNA and amino acid sequencing.</title>
        <authorList>
            <person name="Schuckelt R."/>
            <person name="Brigelius-Flohe R."/>
            <person name="Maiorino M."/>
            <person name="Roveri A."/>
            <person name="Reumkens J."/>
            <person name="Strassburger W."/>
            <person name="Ursini F."/>
            <person name="Wolf B."/>
            <person name="Flohe L."/>
        </authorList>
    </citation>
    <scope>NUCLEOTIDE SEQUENCE [MRNA] OF 40-197 (ISOFORM MITOCHONDRIAL)</scope>
    <scope>PARTIAL PROTEIN SEQUENCE</scope>
    <source>
        <tissue>Heart</tissue>
    </source>
</reference>
<reference key="5">
    <citation type="journal article" date="1985" name="Biochim. Biophys. Acta">
        <title>The selenoenzyme phospholipid hydroperoxide glutathione peroxidase.</title>
        <authorList>
            <person name="Ursini F."/>
            <person name="Maiorino M."/>
            <person name="Gregolin C."/>
        </authorList>
    </citation>
    <scope>CATALYTIC ACTIVITY</scope>
    <scope>SUBUNIT</scope>
    <scope>SELENOCYSTEINE</scope>
    <scope>FUNCTION</scope>
    <source>
        <tissue>Heart</tissue>
    </source>
</reference>
<reference key="6">
    <citation type="journal article" date="1990" name="Biochim. Biophys. Acta">
        <title>Enzymatic reduction of phospholipid and cholesterol hydroperoxides in artificial bilayers and lipoproteins.</title>
        <authorList>
            <person name="Thomas J.P."/>
            <person name="Geiger P.G."/>
            <person name="Maiorino M."/>
            <person name="Ursini F."/>
            <person name="Girotti A.W."/>
        </authorList>
    </citation>
    <scope>FUNCTION</scope>
    <scope>CATALYTIC ACTIVITY</scope>
</reference>
<reference key="7">
    <citation type="journal article" date="1994" name="Arch. Biochem. Biophys.">
        <title>Reduction of HDL- and LDL-associated cholesterylester and phospholipid hydroperoxides by phospholipid hydroperoxide glutathione peroxidase and Ebselen (PZ 51).</title>
        <authorList>
            <person name="Sattler W."/>
            <person name="Maiorino M."/>
            <person name="Stocker R."/>
        </authorList>
    </citation>
    <scope>FUNCTION</scope>
    <scope>CATALYTIC ACTIVITY</scope>
</reference>
<reference key="8">
    <citation type="journal article" date="1996" name="J. Biol. Chem.">
        <title>The selenoenzyme phospholipid hydroperoxide glutathione peroxidase controls the activity of the 15-lipoxygenase with complex substrates and preserves the specificity of the oxygenation products.</title>
        <authorList>
            <person name="Schnurr K."/>
            <person name="Belkner J."/>
            <person name="Ursini F."/>
            <person name="Schewe T."/>
            <person name="Kuehn H."/>
        </authorList>
    </citation>
    <scope>FUNCTION</scope>
    <scope>CATALYTIC ACTIVITY</scope>
</reference>
<protein>
    <recommendedName>
        <fullName evidence="9 11">Phospholipid hydroperoxide glutathione peroxidase</fullName>
        <shortName evidence="9 11">PHGPx</shortName>
        <ecNumber evidence="5 6 7 8">1.11.1.12</ecNumber>
    </recommendedName>
    <alternativeName>
        <fullName evidence="1">Glutathione peroxidase 4</fullName>
        <shortName evidence="1">GPx-4</shortName>
        <shortName evidence="1">GSHPx-4</shortName>
        <ecNumber evidence="6">1.11.1.9</ecNumber>
    </alternativeName>
</protein>
<proteinExistence type="evidence at protein level"/>
<name>GPX4_PIG</name>
<evidence type="ECO:0000250" key="1">
    <source>
        <dbReference type="UniProtKB" id="O70325"/>
    </source>
</evidence>
<evidence type="ECO:0000250" key="2">
    <source>
        <dbReference type="UniProtKB" id="P36969"/>
    </source>
</evidence>
<evidence type="ECO:0000250" key="3">
    <source>
        <dbReference type="UniProtKB" id="P36970"/>
    </source>
</evidence>
<evidence type="ECO:0000255" key="4"/>
<evidence type="ECO:0000269" key="5">
    <source>
    </source>
</evidence>
<evidence type="ECO:0000269" key="6">
    <source>
    </source>
</evidence>
<evidence type="ECO:0000269" key="7">
    <source>
    </source>
</evidence>
<evidence type="ECO:0000269" key="8">
    <source>
    </source>
</evidence>
<evidence type="ECO:0000303" key="9">
    <source>
    </source>
</evidence>
<evidence type="ECO:0000303" key="10">
    <source>
    </source>
</evidence>
<evidence type="ECO:0000303" key="11">
    <source>
    </source>
</evidence>
<evidence type="ECO:0000303" key="12">
    <source>
    </source>
</evidence>
<evidence type="ECO:0000305" key="13"/>
<evidence type="ECO:0000305" key="14">
    <source>
    </source>
</evidence>
<evidence type="ECO:0000305" key="15">
    <source>
    </source>
</evidence>
<organism>
    <name type="scientific">Sus scrofa</name>
    <name type="common">Pig</name>
    <dbReference type="NCBI Taxonomy" id="9823"/>
    <lineage>
        <taxon>Eukaryota</taxon>
        <taxon>Metazoa</taxon>
        <taxon>Chordata</taxon>
        <taxon>Craniata</taxon>
        <taxon>Vertebrata</taxon>
        <taxon>Euteleostomi</taxon>
        <taxon>Mammalia</taxon>
        <taxon>Eutheria</taxon>
        <taxon>Laurasiatheria</taxon>
        <taxon>Artiodactyla</taxon>
        <taxon>Suina</taxon>
        <taxon>Suidae</taxon>
        <taxon>Sus</taxon>
    </lineage>
</organism>
<sequence length="197" mass="22337">MSFSRLFRLLKPTLLCGTLAVPGLAGTMCASRDDWRCARSMHEFSAKDIDGHMVNLDKYRGYVCIVTNVASQUGKTEVNYTQLVDLHARYAECGLRILAFPCNQFGRQEPGSDAEIKEFAAGYNVKFDMFSKICVNGDDAHPLWKWMKVQPKGRGMLGNAIKWNFTKFLIDKNGCVVKRYGPMEEPQVIEKDLPCYL</sequence>
<dbReference type="EC" id="1.11.1.12" evidence="5 6 7 8"/>
<dbReference type="EC" id="1.11.1.9" evidence="6"/>
<dbReference type="EMBL" id="L12743">
    <property type="protein sequence ID" value="AAA31098.2"/>
    <property type="molecule type" value="mRNA"/>
</dbReference>
<dbReference type="EMBL" id="L12743">
    <property type="protein sequence ID" value="AAA31099.2"/>
    <property type="molecule type" value="mRNA"/>
</dbReference>
<dbReference type="EMBL" id="X76008">
    <property type="protein sequence ID" value="CAA53595.2"/>
    <property type="molecule type" value="Genomic_DNA"/>
</dbReference>
<dbReference type="EMBL" id="X76009">
    <property type="protein sequence ID" value="CAA53596.2"/>
    <property type="molecule type" value="mRNA"/>
</dbReference>
<dbReference type="EMBL" id="S80257">
    <property type="protein sequence ID" value="AAB21327.2"/>
    <property type="molecule type" value="mRNA"/>
</dbReference>
<dbReference type="PIR" id="JN0608">
    <property type="entry name" value="JN0608"/>
</dbReference>
<dbReference type="RefSeq" id="NP_999572.1">
    <molecule id="P36968-1"/>
    <property type="nucleotide sequence ID" value="NM_214407.1"/>
</dbReference>
<dbReference type="FunCoup" id="P36968">
    <property type="interactions" value="1471"/>
</dbReference>
<dbReference type="STRING" id="9823.ENSSSCP00000046912"/>
<dbReference type="SwissLipids" id="SLP:000001475"/>
<dbReference type="PeroxiBase" id="3723">
    <property type="entry name" value="SscGPx04"/>
</dbReference>
<dbReference type="PaxDb" id="9823-ENSSSCP00000021702"/>
<dbReference type="PeptideAtlas" id="P36968"/>
<dbReference type="Ensembl" id="ENSSSCT00000105430.1">
    <molecule id="P36968-1"/>
    <property type="protein sequence ID" value="ENSSSCP00000081293.1"/>
    <property type="gene ID" value="ENSSSCG00000024052.4"/>
</dbReference>
<dbReference type="Ensembl" id="ENSSSCT00030021984.1">
    <molecule id="P36968-1"/>
    <property type="protein sequence ID" value="ENSSSCP00030009935.1"/>
    <property type="gene ID" value="ENSSSCG00030015859.1"/>
</dbReference>
<dbReference type="Ensembl" id="ENSSSCT00040076156.1">
    <molecule id="P36968-1"/>
    <property type="protein sequence ID" value="ENSSSCP00040032715.1"/>
    <property type="gene ID" value="ENSSSCG00040056197.1"/>
</dbReference>
<dbReference type="Ensembl" id="ENSSSCT00045060762.1">
    <molecule id="P36968-1"/>
    <property type="protein sequence ID" value="ENSSSCP00045042685.1"/>
    <property type="gene ID" value="ENSSSCG00045035370.1"/>
</dbReference>
<dbReference type="Ensembl" id="ENSSSCT00050085532.1">
    <molecule id="P36968-1"/>
    <property type="protein sequence ID" value="ENSSSCP00050036727.1"/>
    <property type="gene ID" value="ENSSSCG00050062797.1"/>
</dbReference>
<dbReference type="Ensembl" id="ENSSSCT00060023935.1">
    <molecule id="P36968-1"/>
    <property type="protein sequence ID" value="ENSSSCP00060010026.1"/>
    <property type="gene ID" value="ENSSSCG00060017858.1"/>
</dbReference>
<dbReference type="Ensembl" id="ENSSSCT00115022041">
    <molecule id="P36968-1"/>
    <property type="protein sequence ID" value="ENSSSCP00115020874"/>
    <property type="gene ID" value="ENSSSCG00115012753"/>
</dbReference>
<dbReference type="Ensembl" id="ENSSSCT00130070933">
    <molecule id="P36968-1"/>
    <property type="protein sequence ID" value="ENSSSCP00130051279"/>
    <property type="gene ID" value="ENSSSCG00130036186"/>
</dbReference>
<dbReference type="GeneID" id="399537"/>
<dbReference type="KEGG" id="ssc:399537"/>
<dbReference type="CTD" id="2879"/>
<dbReference type="eggNOG" id="KOG1651">
    <property type="taxonomic scope" value="Eukaryota"/>
</dbReference>
<dbReference type="GeneTree" id="ENSGT00940000161913"/>
<dbReference type="HOGENOM" id="CLU_2782607_0_0_1"/>
<dbReference type="InParanoid" id="P36968"/>
<dbReference type="OMA" id="TFPMTEK"/>
<dbReference type="OrthoDB" id="446890at2759"/>
<dbReference type="Reactome" id="R-SSC-2142712">
    <property type="pathway name" value="Synthesis of 12-eicosatetraenoic acid derivatives"/>
</dbReference>
<dbReference type="Reactome" id="R-SSC-2142770">
    <property type="pathway name" value="Synthesis of 15-eicosatetraenoic acid derivatives"/>
</dbReference>
<dbReference type="Reactome" id="R-SSC-9018676">
    <property type="pathway name" value="Biosynthesis of D-series resolvins"/>
</dbReference>
<dbReference type="Reactome" id="R-SSC-9018896">
    <property type="pathway name" value="Biosynthesis of E-series 18(S)-resolvins"/>
</dbReference>
<dbReference type="Reactome" id="R-SSC-9020265">
    <property type="pathway name" value="Biosynthesis of aspirin-triggered D-series resolvins"/>
</dbReference>
<dbReference type="Reactome" id="R-SSC-9023661">
    <property type="pathway name" value="Biosynthesis of E-series 18(R)-resolvins"/>
</dbReference>
<dbReference type="Proteomes" id="UP000008227">
    <property type="component" value="Chromosome 2"/>
</dbReference>
<dbReference type="Proteomes" id="UP000314985">
    <property type="component" value="Unplaced"/>
</dbReference>
<dbReference type="Proteomes" id="UP000694570">
    <property type="component" value="Unplaced"/>
</dbReference>
<dbReference type="Proteomes" id="UP000694571">
    <property type="component" value="Unplaced"/>
</dbReference>
<dbReference type="Proteomes" id="UP000694720">
    <property type="component" value="Unplaced"/>
</dbReference>
<dbReference type="Proteomes" id="UP000694722">
    <property type="component" value="Unplaced"/>
</dbReference>
<dbReference type="Proteomes" id="UP000694723">
    <property type="component" value="Unplaced"/>
</dbReference>
<dbReference type="Proteomes" id="UP000694724">
    <property type="component" value="Unplaced"/>
</dbReference>
<dbReference type="Proteomes" id="UP000694725">
    <property type="component" value="Unplaced"/>
</dbReference>
<dbReference type="Proteomes" id="UP000694726">
    <property type="component" value="Unplaced"/>
</dbReference>
<dbReference type="Proteomes" id="UP000694727">
    <property type="component" value="Unplaced"/>
</dbReference>
<dbReference type="Proteomes" id="UP000694728">
    <property type="component" value="Unplaced"/>
</dbReference>
<dbReference type="Bgee" id="ENSSSCG00000024052">
    <property type="expression patterns" value="Expressed in testis and 46 other cell types or tissues"/>
</dbReference>
<dbReference type="GO" id="GO:0005829">
    <property type="term" value="C:cytosol"/>
    <property type="evidence" value="ECO:0000250"/>
    <property type="project" value="UniProtKB"/>
</dbReference>
<dbReference type="GO" id="GO:0005739">
    <property type="term" value="C:mitochondrion"/>
    <property type="evidence" value="ECO:0000318"/>
    <property type="project" value="GO_Central"/>
</dbReference>
<dbReference type="GO" id="GO:0005634">
    <property type="term" value="C:nucleus"/>
    <property type="evidence" value="ECO:0000318"/>
    <property type="project" value="GO_Central"/>
</dbReference>
<dbReference type="GO" id="GO:0004602">
    <property type="term" value="F:glutathione peroxidase activity"/>
    <property type="evidence" value="ECO:0000318"/>
    <property type="project" value="GO_Central"/>
</dbReference>
<dbReference type="GO" id="GO:0047066">
    <property type="term" value="F:phospholipid-hydroperoxide glutathione peroxidase activity"/>
    <property type="evidence" value="ECO:0000314"/>
    <property type="project" value="UniProtKB"/>
</dbReference>
<dbReference type="GO" id="GO:0019369">
    <property type="term" value="P:arachidonate metabolic process"/>
    <property type="evidence" value="ECO:0000250"/>
    <property type="project" value="UniProtKB"/>
</dbReference>
<dbReference type="GO" id="GO:0019372">
    <property type="term" value="P:lipoxygenase pathway"/>
    <property type="evidence" value="ECO:0000250"/>
    <property type="project" value="UniProtKB"/>
</dbReference>
<dbReference type="GO" id="GO:0110076">
    <property type="term" value="P:negative regulation of ferroptosis"/>
    <property type="evidence" value="ECO:0000250"/>
    <property type="project" value="UniProtKB"/>
</dbReference>
<dbReference type="GO" id="GO:0006979">
    <property type="term" value="P:response to oxidative stress"/>
    <property type="evidence" value="ECO:0000314"/>
    <property type="project" value="UniProtKB"/>
</dbReference>
<dbReference type="GO" id="GO:0007283">
    <property type="term" value="P:spermatogenesis"/>
    <property type="evidence" value="ECO:0000250"/>
    <property type="project" value="UniProtKB"/>
</dbReference>
<dbReference type="CDD" id="cd00340">
    <property type="entry name" value="GSH_Peroxidase"/>
    <property type="match status" value="1"/>
</dbReference>
<dbReference type="FunFam" id="3.40.30.10:FF:000111">
    <property type="entry name" value="Glutathione peroxidase"/>
    <property type="match status" value="1"/>
</dbReference>
<dbReference type="Gene3D" id="3.40.30.10">
    <property type="entry name" value="Glutaredoxin"/>
    <property type="match status" value="1"/>
</dbReference>
<dbReference type="InterPro" id="IPR000889">
    <property type="entry name" value="Glutathione_peroxidase"/>
</dbReference>
<dbReference type="InterPro" id="IPR029759">
    <property type="entry name" value="GPX_AS"/>
</dbReference>
<dbReference type="InterPro" id="IPR029760">
    <property type="entry name" value="GPX_CS"/>
</dbReference>
<dbReference type="InterPro" id="IPR036249">
    <property type="entry name" value="Thioredoxin-like_sf"/>
</dbReference>
<dbReference type="PANTHER" id="PTHR11592">
    <property type="entry name" value="GLUTATHIONE PEROXIDASE"/>
    <property type="match status" value="1"/>
</dbReference>
<dbReference type="PANTHER" id="PTHR11592:SF134">
    <property type="entry name" value="PHOSPHOLIPID HYDROPEROXIDE GLUTATHIONE PEROXIDASE"/>
    <property type="match status" value="1"/>
</dbReference>
<dbReference type="Pfam" id="PF00255">
    <property type="entry name" value="GSHPx"/>
    <property type="match status" value="1"/>
</dbReference>
<dbReference type="PIRSF" id="PIRSF000303">
    <property type="entry name" value="Glutathion_perox"/>
    <property type="match status" value="1"/>
</dbReference>
<dbReference type="PRINTS" id="PR01011">
    <property type="entry name" value="GLUTPROXDASE"/>
</dbReference>
<dbReference type="SUPFAM" id="SSF52833">
    <property type="entry name" value="Thioredoxin-like"/>
    <property type="match status" value="1"/>
</dbReference>
<dbReference type="PROSITE" id="PS00460">
    <property type="entry name" value="GLUTATHIONE_PEROXID_1"/>
    <property type="match status" value="1"/>
</dbReference>
<dbReference type="PROSITE" id="PS00763">
    <property type="entry name" value="GLUTATHIONE_PEROXID_2"/>
    <property type="match status" value="1"/>
</dbReference>
<dbReference type="PROSITE" id="PS51355">
    <property type="entry name" value="GLUTATHIONE_PEROXID_3"/>
    <property type="match status" value="1"/>
</dbReference>
<accession>P36968</accession>
<gene>
    <name evidence="1" type="primary">GPX4</name>
</gene>
<feature type="transit peptide" description="Mitochondrion" evidence="4">
    <location>
        <begin position="1"/>
        <end status="unknown"/>
    </location>
</feature>
<feature type="chain" id="PRO_0000013071" description="Phospholipid hydroperoxide glutathione peroxidase">
    <location>
        <begin status="unknown"/>
        <end position="197"/>
    </location>
</feature>
<feature type="active site" evidence="6">
    <location>
        <position position="73"/>
    </location>
</feature>
<feature type="non-standard amino acid" description="Selenocysteine" evidence="6">
    <location>
        <position position="73"/>
    </location>
</feature>
<feature type="modified residue" description="Phosphoserine" evidence="3">
    <location>
        <position position="40"/>
    </location>
</feature>
<feature type="splice variant" id="VSP_018744" description="In isoform Cytoplasmic." evidence="10 12">
    <location>
        <begin position="1"/>
        <end position="27"/>
    </location>
</feature>